<evidence type="ECO:0000255" key="1">
    <source>
        <dbReference type="HAMAP-Rule" id="MF_00424"/>
    </source>
</evidence>
<comment type="function">
    <text evidence="1">Directs the termination of nascent peptide synthesis (translation) in response to the termination codons UAA, UAG and UGA.</text>
</comment>
<comment type="subunit">
    <text evidence="1">Heterodimer of two subunits, one of which binds GTP.</text>
</comment>
<comment type="subcellular location">
    <subcellularLocation>
        <location evidence="1">Cytoplasm</location>
    </subcellularLocation>
</comment>
<comment type="similarity">
    <text evidence="1">Belongs to the eukaryotic release factor 1 family.</text>
</comment>
<gene>
    <name evidence="1" type="primary">prf12</name>
    <name type="synonym">erf1</name>
    <name type="ordered locus">MA_1008</name>
</gene>
<feature type="chain" id="PRO_0000143173" description="Peptide chain release factor subunit 1-2">
    <location>
        <begin position="1"/>
        <end position="415"/>
    </location>
</feature>
<dbReference type="EMBL" id="AE010299">
    <property type="protein sequence ID" value="AAM04439.1"/>
    <property type="molecule type" value="Genomic_DNA"/>
</dbReference>
<dbReference type="RefSeq" id="WP_011021044.1">
    <property type="nucleotide sequence ID" value="NC_003552.1"/>
</dbReference>
<dbReference type="SMR" id="Q8TS00"/>
<dbReference type="FunCoup" id="Q8TS00">
    <property type="interactions" value="228"/>
</dbReference>
<dbReference type="STRING" id="188937.MA_1008"/>
<dbReference type="EnsemblBacteria" id="AAM04439">
    <property type="protein sequence ID" value="AAM04439"/>
    <property type="gene ID" value="MA_1008"/>
</dbReference>
<dbReference type="GeneID" id="1472898"/>
<dbReference type="KEGG" id="mac:MA_1008"/>
<dbReference type="HOGENOM" id="CLU_035759_3_0_2"/>
<dbReference type="InParanoid" id="Q8TS00"/>
<dbReference type="OrthoDB" id="1011at2157"/>
<dbReference type="PhylomeDB" id="Q8TS00"/>
<dbReference type="Proteomes" id="UP000002487">
    <property type="component" value="Chromosome"/>
</dbReference>
<dbReference type="GO" id="GO:0005829">
    <property type="term" value="C:cytosol"/>
    <property type="evidence" value="ECO:0000318"/>
    <property type="project" value="GO_Central"/>
</dbReference>
<dbReference type="GO" id="GO:0018444">
    <property type="term" value="C:translation release factor complex"/>
    <property type="evidence" value="ECO:0000318"/>
    <property type="project" value="GO_Central"/>
</dbReference>
<dbReference type="GO" id="GO:1990825">
    <property type="term" value="F:sequence-specific mRNA binding"/>
    <property type="evidence" value="ECO:0000318"/>
    <property type="project" value="GO_Central"/>
</dbReference>
<dbReference type="GO" id="GO:0016149">
    <property type="term" value="F:translation release factor activity, codon specific"/>
    <property type="evidence" value="ECO:0000318"/>
    <property type="project" value="GO_Central"/>
</dbReference>
<dbReference type="FunFam" id="1.20.5.170:FF:000115">
    <property type="entry name" value="Peptide chain release factor subunit 1"/>
    <property type="match status" value="1"/>
</dbReference>
<dbReference type="FunFam" id="3.30.420.60:FF:000003">
    <property type="entry name" value="Peptide chain release factor subunit 1"/>
    <property type="match status" value="1"/>
</dbReference>
<dbReference type="FunFam" id="3.30.960.10:FF:000003">
    <property type="entry name" value="Peptide chain release factor subunit 1"/>
    <property type="match status" value="1"/>
</dbReference>
<dbReference type="Gene3D" id="1.20.5.170">
    <property type="match status" value="1"/>
</dbReference>
<dbReference type="Gene3D" id="3.30.1330.30">
    <property type="match status" value="1"/>
</dbReference>
<dbReference type="Gene3D" id="3.30.960.10">
    <property type="entry name" value="eRF1 domain 1"/>
    <property type="match status" value="1"/>
</dbReference>
<dbReference type="Gene3D" id="3.30.420.60">
    <property type="entry name" value="eRF1 domain 2"/>
    <property type="match status" value="1"/>
</dbReference>
<dbReference type="HAMAP" id="MF_00424">
    <property type="entry name" value="Rel_fact_arch_1"/>
    <property type="match status" value="1"/>
</dbReference>
<dbReference type="InterPro" id="IPR042226">
    <property type="entry name" value="eFR1_2_sf"/>
</dbReference>
<dbReference type="InterPro" id="IPR005140">
    <property type="entry name" value="eRF1_1_Pelota"/>
</dbReference>
<dbReference type="InterPro" id="IPR024049">
    <property type="entry name" value="eRF1_1_sf"/>
</dbReference>
<dbReference type="InterPro" id="IPR005141">
    <property type="entry name" value="eRF1_2"/>
</dbReference>
<dbReference type="InterPro" id="IPR005142">
    <property type="entry name" value="eRF1_3"/>
</dbReference>
<dbReference type="InterPro" id="IPR020918">
    <property type="entry name" value="Peptide_chain-rel_aRF1"/>
</dbReference>
<dbReference type="InterPro" id="IPR004403">
    <property type="entry name" value="Peptide_chain-rel_eRF1/aRF1"/>
</dbReference>
<dbReference type="InterPro" id="IPR029064">
    <property type="entry name" value="Ribosomal_eL30-like_sf"/>
</dbReference>
<dbReference type="NCBIfam" id="TIGR03676">
    <property type="entry name" value="aRF1_eRF1"/>
    <property type="match status" value="1"/>
</dbReference>
<dbReference type="PANTHER" id="PTHR10113">
    <property type="entry name" value="PEPTIDE CHAIN RELEASE FACTOR SUBUNIT 1"/>
    <property type="match status" value="1"/>
</dbReference>
<dbReference type="Pfam" id="PF03463">
    <property type="entry name" value="eRF1_1"/>
    <property type="match status" value="1"/>
</dbReference>
<dbReference type="Pfam" id="PF03464">
    <property type="entry name" value="eRF1_2"/>
    <property type="match status" value="1"/>
</dbReference>
<dbReference type="Pfam" id="PF03465">
    <property type="entry name" value="eRF1_3"/>
    <property type="match status" value="1"/>
</dbReference>
<dbReference type="SMART" id="SM01194">
    <property type="entry name" value="eRF1_1"/>
    <property type="match status" value="1"/>
</dbReference>
<dbReference type="SUPFAM" id="SSF55315">
    <property type="entry name" value="L30e-like"/>
    <property type="match status" value="1"/>
</dbReference>
<dbReference type="SUPFAM" id="SSF55481">
    <property type="entry name" value="N-terminal domain of eukaryotic peptide chain release factor subunit 1, ERF1"/>
    <property type="match status" value="1"/>
</dbReference>
<dbReference type="SUPFAM" id="SSF53137">
    <property type="entry name" value="Translational machinery components"/>
    <property type="match status" value="1"/>
</dbReference>
<accession>Q8TS00</accession>
<organism>
    <name type="scientific">Methanosarcina acetivorans (strain ATCC 35395 / DSM 2834 / JCM 12185 / C2A)</name>
    <dbReference type="NCBI Taxonomy" id="188937"/>
    <lineage>
        <taxon>Archaea</taxon>
        <taxon>Methanobacteriati</taxon>
        <taxon>Methanobacteriota</taxon>
        <taxon>Stenosarchaea group</taxon>
        <taxon>Methanomicrobia</taxon>
        <taxon>Methanosarcinales</taxon>
        <taxon>Methanosarcinaceae</taxon>
        <taxon>Methanosarcina</taxon>
    </lineage>
</organism>
<name>RF12_METAC</name>
<reference key="1">
    <citation type="journal article" date="2002" name="Genome Res.">
        <title>The genome of Methanosarcina acetivorans reveals extensive metabolic and physiological diversity.</title>
        <authorList>
            <person name="Galagan J.E."/>
            <person name="Nusbaum C."/>
            <person name="Roy A."/>
            <person name="Endrizzi M.G."/>
            <person name="Macdonald P."/>
            <person name="FitzHugh W."/>
            <person name="Calvo S."/>
            <person name="Engels R."/>
            <person name="Smirnov S."/>
            <person name="Atnoor D."/>
            <person name="Brown A."/>
            <person name="Allen N."/>
            <person name="Naylor J."/>
            <person name="Stange-Thomann N."/>
            <person name="DeArellano K."/>
            <person name="Johnson R."/>
            <person name="Linton L."/>
            <person name="McEwan P."/>
            <person name="McKernan K."/>
            <person name="Talamas J."/>
            <person name="Tirrell A."/>
            <person name="Ye W."/>
            <person name="Zimmer A."/>
            <person name="Barber R.D."/>
            <person name="Cann I."/>
            <person name="Graham D.E."/>
            <person name="Grahame D.A."/>
            <person name="Guss A.M."/>
            <person name="Hedderich R."/>
            <person name="Ingram-Smith C."/>
            <person name="Kuettner H.C."/>
            <person name="Krzycki J.A."/>
            <person name="Leigh J.A."/>
            <person name="Li W."/>
            <person name="Liu J."/>
            <person name="Mukhopadhyay B."/>
            <person name="Reeve J.N."/>
            <person name="Smith K."/>
            <person name="Springer T.A."/>
            <person name="Umayam L.A."/>
            <person name="White O."/>
            <person name="White R.H."/>
            <person name="de Macario E.C."/>
            <person name="Ferry J.G."/>
            <person name="Jarrell K.F."/>
            <person name="Jing H."/>
            <person name="Macario A.J.L."/>
            <person name="Paulsen I.T."/>
            <person name="Pritchett M."/>
            <person name="Sowers K.R."/>
            <person name="Swanson R.V."/>
            <person name="Zinder S.H."/>
            <person name="Lander E."/>
            <person name="Metcalf W.W."/>
            <person name="Birren B."/>
        </authorList>
    </citation>
    <scope>NUCLEOTIDE SEQUENCE [LARGE SCALE GENOMIC DNA]</scope>
    <source>
        <strain>ATCC 35395 / DSM 2834 / JCM 12185 / C2A</strain>
    </source>
</reference>
<proteinExistence type="inferred from homology"/>
<keyword id="KW-0963">Cytoplasm</keyword>
<keyword id="KW-0648">Protein biosynthesis</keyword>
<keyword id="KW-1185">Reference proteome</keyword>
<sequence>MAEYCTYEKYVFKKQLETLKSKNGRSTELISLYIPPDKQISDVTKHLREEHEQASNIISKLIRNNVQEALHSLLAKLRSLHKIPENGIVYFTGTVDTGANRTGMVNEVLFPPEPVADYIYRCDSVFYLEPLEEMLRECTTYGLLLLDLREATIGMLVGRQTEVIKHLHSTVPGKQRKGGQSAHRFEQLRRIAIHDFYKRIGDATSEAFLELDPAELKGILIGGHSPTKEEFNEGGFLHYELQKKVLGLFDTGYTDESGFSELINAAEETLQSIDLLKQKKDMEIFFKEIATESGKISYGEDNVRANLEIKAVDVLLLSEELRAERVTLKCRVCGYENKRTRKWKTGEAVPAIGHCPECDSELEVTDVIDTVGELSELADKGDARIAFISTDFDEGSQLMIAFGGIAAILRYNTGV</sequence>
<protein>
    <recommendedName>
        <fullName evidence="1">Peptide chain release factor subunit 1-2</fullName>
    </recommendedName>
    <alternativeName>
        <fullName evidence="1">Translation termination factor aRF1 2</fullName>
    </alternativeName>
</protein>